<feature type="signal peptide" evidence="5">
    <location>
        <begin position="1"/>
        <end position="25"/>
    </location>
</feature>
<feature type="chain" id="PRO_0000000347" description="Neuronal acetylcholine receptor subunit alpha-3">
    <location>
        <begin position="26"/>
        <end position="499"/>
    </location>
</feature>
<feature type="topological domain" description="Extracellular" evidence="3">
    <location>
        <begin position="26"/>
        <end position="244"/>
    </location>
</feature>
<feature type="transmembrane region" description="Helical" evidence="3">
    <location>
        <begin position="245"/>
        <end position="260"/>
    </location>
</feature>
<feature type="topological domain" description="Cytoplasmic" evidence="3">
    <location>
        <begin position="261"/>
        <end position="262"/>
    </location>
</feature>
<feature type="transmembrane region" description="Helical" evidence="3">
    <location>
        <begin position="263"/>
        <end position="279"/>
    </location>
</feature>
<feature type="topological domain" description="Extracellular" evidence="3">
    <location>
        <begin position="280"/>
        <end position="301"/>
    </location>
</feature>
<feature type="transmembrane region" description="Helical" evidence="3">
    <location>
        <begin position="302"/>
        <end position="320"/>
    </location>
</feature>
<feature type="topological domain" description="Cytoplasmic" evidence="3">
    <location>
        <begin position="321"/>
        <end position="468"/>
    </location>
</feature>
<feature type="transmembrane region" description="Helical" evidence="3">
    <location>
        <begin position="469"/>
        <end position="487"/>
    </location>
</feature>
<feature type="topological domain" description="Extracellular" evidence="3">
    <location>
        <begin position="488"/>
        <end position="499"/>
    </location>
</feature>
<feature type="binding site" evidence="3">
    <location>
        <position position="265"/>
    </location>
    <ligand>
        <name>Na(+)</name>
        <dbReference type="ChEBI" id="CHEBI:29101"/>
    </ligand>
</feature>
<feature type="modified residue" description="Phosphoserine" evidence="2">
    <location>
        <position position="407"/>
    </location>
</feature>
<feature type="modified residue" description="Phosphoserine" evidence="2">
    <location>
        <position position="410"/>
    </location>
</feature>
<feature type="glycosylation site" description="N-linked (GlcNAc...) asparagine" evidence="5">
    <location>
        <position position="49"/>
    </location>
</feature>
<feature type="glycosylation site" description="N-linked (GlcNAc...) asparagine" evidence="5">
    <location>
        <position position="166"/>
    </location>
</feature>
<feature type="disulfide bond" evidence="3">
    <location>
        <begin position="153"/>
        <end position="167"/>
    </location>
</feature>
<feature type="disulfide bond" description="Associated with receptor activation" evidence="3">
    <location>
        <begin position="217"/>
        <end position="218"/>
    </location>
</feature>
<keyword id="KW-1003">Cell membrane</keyword>
<keyword id="KW-1015">Disulfide bond</keyword>
<keyword id="KW-0256">Endoplasmic reticulum</keyword>
<keyword id="KW-0325">Glycoprotein</keyword>
<keyword id="KW-0333">Golgi apparatus</keyword>
<keyword id="KW-0407">Ion channel</keyword>
<keyword id="KW-0406">Ion transport</keyword>
<keyword id="KW-1071">Ligand-gated ion channel</keyword>
<keyword id="KW-0472">Membrane</keyword>
<keyword id="KW-0479">Metal-binding</keyword>
<keyword id="KW-0597">Phosphoprotein</keyword>
<keyword id="KW-0675">Receptor</keyword>
<keyword id="KW-1185">Reference proteome</keyword>
<keyword id="KW-0732">Signal</keyword>
<keyword id="KW-0915">Sodium</keyword>
<keyword id="KW-0770">Synapse</keyword>
<keyword id="KW-0812">Transmembrane</keyword>
<keyword id="KW-1133">Transmembrane helix</keyword>
<keyword id="KW-0813">Transport</keyword>
<keyword id="KW-0832">Ubl conjugation</keyword>
<protein>
    <recommendedName>
        <fullName>Neuronal acetylcholine receptor subunit alpha-3</fullName>
    </recommendedName>
</protein>
<gene>
    <name type="primary">Chrna3</name>
</gene>
<comment type="function">
    <text evidence="2 3 7 8">Component of neuronal acetylcholine receptors (nAChRs) that function as pentameric, ligand-gated cation channels with high calcium permeability among other activities. nAChRs are excitatory neurotrasnmitter receptors formed by a collection of nAChR subunits known to mediate synaptic transmission in the nervous system and the neuromuscular junction. Each nAchR subunit confers differential attributes to channel properties, including activation, deactivation and desensitization kinetics, pH sensitivity, cation permeability, and binding to allosteric modulators (PubMed:21555077). CHRNA3 forms heteropentameric neuronal acetylcholine receptors with CHRNA5, CHRNB2 and CHRNB4 (PubMed:21555077). CHRNA3:CHRNB4 being predominant in neurons of the autonomic ganglia, it is known as ganglionic nicotinic receptor (By similarity). CHRNA3:CHRNB4 or CHRNA3:CHRNA5:CHRNB4 play also an important role in the habenulo-interpeduncular tract, modulating the mesolimbic dopamine system and affecting reward circuits and addiction (PubMed:21555077). Hypothalamic CHRNA3:CHRNB4 nAChR activation by nicotine leads to activation of POMC neurons and a decrease in food intake (PubMed:21659607). Also expressed in the urothelium where it modulates reflex bladder activity by increasing intracellular calcium through extracellular influx and basal ATP release (By similarity).</text>
</comment>
<comment type="catalytic activity">
    <reaction evidence="1">
        <text>K(+)(in) = K(+)(out)</text>
        <dbReference type="Rhea" id="RHEA:29463"/>
        <dbReference type="ChEBI" id="CHEBI:29103"/>
    </reaction>
</comment>
<comment type="catalytic activity">
    <reaction evidence="4">
        <text>Na(+)(in) = Na(+)(out)</text>
        <dbReference type="Rhea" id="RHEA:34963"/>
        <dbReference type="ChEBI" id="CHEBI:29101"/>
    </reaction>
</comment>
<comment type="catalytic activity">
    <reaction evidence="2">
        <text>Ca(2+)(in) = Ca(2+)(out)</text>
        <dbReference type="Rhea" id="RHEA:29671"/>
        <dbReference type="ChEBI" id="CHEBI:29108"/>
    </reaction>
</comment>
<comment type="activity regulation">
    <text evidence="2 3 7 8">Activated by a myriad of ligands such as acetylcholine, cytisine, nicotine, choline and epibatidine (PubMed:21555077, PubMed:21659607). The heteropentamer CHRNA3:CHRNB2 activity is blocked by alpha-conotoxins ImI, ImII, PnIA, GID and MII (By similarity). The heteropentamer CHRNA3:CHRNB4 activity is blocked by the alpha-conotoxin ImI (By similarity).</text>
</comment>
<comment type="subunit">
    <text evidence="3 6">Neuronal AChR is composed of two different types of subunits: alpha and beta. CHRNA3/Alpha-3 subunit can be combined to CHRNB2/beta-2 or CHRNB4/beta-4 to give rise to functional receptors. Part of a complex composed of STUB1/CHIP, VCP/p97, CHRNA3, and UBXN2A that modulates the ubiquitination and endoplasmic reticulum-associated degradation (ERAD) of CHRNA3. Within the complex UBXN2A acts as a scaffold protein required for the interaction of CHRNA3 with VCP/p97, this interaction also inhibits CHRNA3 ubiquitination by STUB1/CHIP and subsequently ERAD (By similarity). Interacts with UBXN2A (via SEP domain), the interaction is required for the interaction of CHRNA3 in the STUB1:VCP:UBXN2A complex (PubMed:19474315). Interacts with RIC3; which is required for proper folding and assembly. Interacts with LYPD6 (By similarity).</text>
</comment>
<comment type="subcellular location">
    <subcellularLocation>
        <location evidence="10">Synaptic cell membrane</location>
        <topology evidence="5">Multi-pass membrane protein</topology>
    </subcellularLocation>
    <subcellularLocation>
        <location evidence="10">Cell membrane</location>
        <topology evidence="5">Multi-pass membrane protein</topology>
    </subcellularLocation>
    <subcellularLocation>
        <location evidence="2">Endoplasmic reticulum</location>
    </subcellularLocation>
    <subcellularLocation>
        <location evidence="2">Golgi apparatus</location>
    </subcellularLocation>
    <text evidence="2">Interaction with UBXN2A/UBXD4 promotes translocation to the plasma membrane.</text>
</comment>
<comment type="tissue specificity">
    <text evidence="6">Expressed in the brain (at protein level).</text>
</comment>
<comment type="PTM">
    <text evidence="2">Ubiquitinated; by STUB1/CHIP and thereafter degraded by the 26S proteosome complex.</text>
</comment>
<comment type="similarity">
    <text evidence="9">Belongs to the ligand-gated ion channel (TC 1.A.9) family. Acetylcholine receptor (TC 1.A.9.1) subfamily. Alpha-3/CHRNA3 sub-subfamily.</text>
</comment>
<comment type="sequence caution" evidence="9">
    <conflict type="erroneous initiation">
        <sequence resource="EMBL-CDS" id="BAC37909"/>
    </conflict>
    <text>Extended N-terminus.</text>
</comment>
<accession>Q8R4G9</accession>
<accession>Q8BV44</accession>
<name>ACHA3_MOUSE</name>
<evidence type="ECO:0000250" key="1">
    <source>
        <dbReference type="UniProtKB" id="P02709"/>
    </source>
</evidence>
<evidence type="ECO:0000250" key="2">
    <source>
        <dbReference type="UniProtKB" id="P04757"/>
    </source>
</evidence>
<evidence type="ECO:0000250" key="3">
    <source>
        <dbReference type="UniProtKB" id="P32297"/>
    </source>
</evidence>
<evidence type="ECO:0000250" key="4">
    <source>
        <dbReference type="UniProtKB" id="P43681"/>
    </source>
</evidence>
<evidence type="ECO:0000255" key="5"/>
<evidence type="ECO:0000269" key="6">
    <source>
    </source>
</evidence>
<evidence type="ECO:0000269" key="7">
    <source>
    </source>
</evidence>
<evidence type="ECO:0000269" key="8">
    <source>
    </source>
</evidence>
<evidence type="ECO:0000305" key="9"/>
<evidence type="ECO:0000305" key="10">
    <source>
    </source>
</evidence>
<organism>
    <name type="scientific">Mus musculus</name>
    <name type="common">Mouse</name>
    <dbReference type="NCBI Taxonomy" id="10090"/>
    <lineage>
        <taxon>Eukaryota</taxon>
        <taxon>Metazoa</taxon>
        <taxon>Chordata</taxon>
        <taxon>Craniata</taxon>
        <taxon>Vertebrata</taxon>
        <taxon>Euteleostomi</taxon>
        <taxon>Mammalia</taxon>
        <taxon>Eutheria</taxon>
        <taxon>Euarchontoglires</taxon>
        <taxon>Glires</taxon>
        <taxon>Rodentia</taxon>
        <taxon>Myomorpha</taxon>
        <taxon>Muroidea</taxon>
        <taxon>Muridae</taxon>
        <taxon>Murinae</taxon>
        <taxon>Mus</taxon>
        <taxon>Mus</taxon>
    </lineage>
</organism>
<sequence>MGVVLPPPPLSMLMLVLMLLPVASASEAEHRLFQYLFEDYNEIIRPVANVSHPVIIQFEVSMSQLVKVDEVNQIMETNLWLKQIWNDYKLKWKPSDYQGVEFMRVPAEKIWKPDIVLYNNADGDFQVDDKTKALLKYTGEVTWIPPAIFKSSCKIDVTYFPFDYQNCTMKFGSWSYDKAKIDLVLIGSSMNLKDYWESGEWAIIKAPGYKHEIKYNCCEEIYQDITYSLYIRRLPLFYTINLIIPCLLISFLTVLVFYLPSDCGEKVTLCISVLLSLTVFLLVITETIPSTSLVIPLIGEYLLFTMIFVTLSIVITVFVLNVHYRTPTTHTMPTWVKAVFLNLLPRVMFMTRPTSTEEDAPKTRNFYGAELSNLNCFSRADSKSCKEGYPCQDGTCGYCHHRRVKISNFSANLTRSSSSESVDAVLSLSALSPEIKEAIQSVKYIAENMKAQNVAKEIQDDWKYVAMVIDRIFLWVFILVCILGTAGLFLQPLMARDDT</sequence>
<proteinExistence type="evidence at protein level"/>
<reference key="1">
    <citation type="submission" date="2002-01" db="EMBL/GenBank/DDBJ databases">
        <title>Cloning of mouse nicotinic acetylcholine receptor alpha 3 subunit cDNA.</title>
        <authorList>
            <person name="Lautner M.A."/>
            <person name="Stitzel J.A."/>
        </authorList>
    </citation>
    <scope>NUCLEOTIDE SEQUENCE [MRNA]</scope>
    <source>
        <strain>DBA/2Ibg</strain>
        <tissue>Adrenal gland</tissue>
    </source>
</reference>
<reference key="2">
    <citation type="submission" date="2004-03" db="EMBL/GenBank/DDBJ databases">
        <authorList>
            <person name="Groot Kormelink P.J."/>
        </authorList>
    </citation>
    <scope>NUCLEOTIDE SEQUENCE [MRNA]</scope>
    <source>
        <strain>BALB/cJ</strain>
        <tissue>Brain</tissue>
    </source>
</reference>
<reference key="3">
    <citation type="journal article" date="2005" name="Science">
        <title>The transcriptional landscape of the mammalian genome.</title>
        <authorList>
            <person name="Carninci P."/>
            <person name="Kasukawa T."/>
            <person name="Katayama S."/>
            <person name="Gough J."/>
            <person name="Frith M.C."/>
            <person name="Maeda N."/>
            <person name="Oyama R."/>
            <person name="Ravasi T."/>
            <person name="Lenhard B."/>
            <person name="Wells C."/>
            <person name="Kodzius R."/>
            <person name="Shimokawa K."/>
            <person name="Bajic V.B."/>
            <person name="Brenner S.E."/>
            <person name="Batalov S."/>
            <person name="Forrest A.R."/>
            <person name="Zavolan M."/>
            <person name="Davis M.J."/>
            <person name="Wilming L.G."/>
            <person name="Aidinis V."/>
            <person name="Allen J.E."/>
            <person name="Ambesi-Impiombato A."/>
            <person name="Apweiler R."/>
            <person name="Aturaliya R.N."/>
            <person name="Bailey T.L."/>
            <person name="Bansal M."/>
            <person name="Baxter L."/>
            <person name="Beisel K.W."/>
            <person name="Bersano T."/>
            <person name="Bono H."/>
            <person name="Chalk A.M."/>
            <person name="Chiu K.P."/>
            <person name="Choudhary V."/>
            <person name="Christoffels A."/>
            <person name="Clutterbuck D.R."/>
            <person name="Crowe M.L."/>
            <person name="Dalla E."/>
            <person name="Dalrymple B.P."/>
            <person name="de Bono B."/>
            <person name="Della Gatta G."/>
            <person name="di Bernardo D."/>
            <person name="Down T."/>
            <person name="Engstrom P."/>
            <person name="Fagiolini M."/>
            <person name="Faulkner G."/>
            <person name="Fletcher C.F."/>
            <person name="Fukushima T."/>
            <person name="Furuno M."/>
            <person name="Futaki S."/>
            <person name="Gariboldi M."/>
            <person name="Georgii-Hemming P."/>
            <person name="Gingeras T.R."/>
            <person name="Gojobori T."/>
            <person name="Green R.E."/>
            <person name="Gustincich S."/>
            <person name="Harbers M."/>
            <person name="Hayashi Y."/>
            <person name="Hensch T.K."/>
            <person name="Hirokawa N."/>
            <person name="Hill D."/>
            <person name="Huminiecki L."/>
            <person name="Iacono M."/>
            <person name="Ikeo K."/>
            <person name="Iwama A."/>
            <person name="Ishikawa T."/>
            <person name="Jakt M."/>
            <person name="Kanapin A."/>
            <person name="Katoh M."/>
            <person name="Kawasawa Y."/>
            <person name="Kelso J."/>
            <person name="Kitamura H."/>
            <person name="Kitano H."/>
            <person name="Kollias G."/>
            <person name="Krishnan S.P."/>
            <person name="Kruger A."/>
            <person name="Kummerfeld S.K."/>
            <person name="Kurochkin I.V."/>
            <person name="Lareau L.F."/>
            <person name="Lazarevic D."/>
            <person name="Lipovich L."/>
            <person name="Liu J."/>
            <person name="Liuni S."/>
            <person name="McWilliam S."/>
            <person name="Madan Babu M."/>
            <person name="Madera M."/>
            <person name="Marchionni L."/>
            <person name="Matsuda H."/>
            <person name="Matsuzawa S."/>
            <person name="Miki H."/>
            <person name="Mignone F."/>
            <person name="Miyake S."/>
            <person name="Morris K."/>
            <person name="Mottagui-Tabar S."/>
            <person name="Mulder N."/>
            <person name="Nakano N."/>
            <person name="Nakauchi H."/>
            <person name="Ng P."/>
            <person name="Nilsson R."/>
            <person name="Nishiguchi S."/>
            <person name="Nishikawa S."/>
            <person name="Nori F."/>
            <person name="Ohara O."/>
            <person name="Okazaki Y."/>
            <person name="Orlando V."/>
            <person name="Pang K.C."/>
            <person name="Pavan W.J."/>
            <person name="Pavesi G."/>
            <person name="Pesole G."/>
            <person name="Petrovsky N."/>
            <person name="Piazza S."/>
            <person name="Reed J."/>
            <person name="Reid J.F."/>
            <person name="Ring B.Z."/>
            <person name="Ringwald M."/>
            <person name="Rost B."/>
            <person name="Ruan Y."/>
            <person name="Salzberg S.L."/>
            <person name="Sandelin A."/>
            <person name="Schneider C."/>
            <person name="Schoenbach C."/>
            <person name="Sekiguchi K."/>
            <person name="Semple C.A."/>
            <person name="Seno S."/>
            <person name="Sessa L."/>
            <person name="Sheng Y."/>
            <person name="Shibata Y."/>
            <person name="Shimada H."/>
            <person name="Shimada K."/>
            <person name="Silva D."/>
            <person name="Sinclair B."/>
            <person name="Sperling S."/>
            <person name="Stupka E."/>
            <person name="Sugiura K."/>
            <person name="Sultana R."/>
            <person name="Takenaka Y."/>
            <person name="Taki K."/>
            <person name="Tammoja K."/>
            <person name="Tan S.L."/>
            <person name="Tang S."/>
            <person name="Taylor M.S."/>
            <person name="Tegner J."/>
            <person name="Teichmann S.A."/>
            <person name="Ueda H.R."/>
            <person name="van Nimwegen E."/>
            <person name="Verardo R."/>
            <person name="Wei C.L."/>
            <person name="Yagi K."/>
            <person name="Yamanishi H."/>
            <person name="Zabarovsky E."/>
            <person name="Zhu S."/>
            <person name="Zimmer A."/>
            <person name="Hide W."/>
            <person name="Bult C."/>
            <person name="Grimmond S.M."/>
            <person name="Teasdale R.D."/>
            <person name="Liu E.T."/>
            <person name="Brusic V."/>
            <person name="Quackenbush J."/>
            <person name="Wahlestedt C."/>
            <person name="Mattick J.S."/>
            <person name="Hume D.A."/>
            <person name="Kai C."/>
            <person name="Sasaki D."/>
            <person name="Tomaru Y."/>
            <person name="Fukuda S."/>
            <person name="Kanamori-Katayama M."/>
            <person name="Suzuki M."/>
            <person name="Aoki J."/>
            <person name="Arakawa T."/>
            <person name="Iida J."/>
            <person name="Imamura K."/>
            <person name="Itoh M."/>
            <person name="Kato T."/>
            <person name="Kawaji H."/>
            <person name="Kawagashira N."/>
            <person name="Kawashima T."/>
            <person name="Kojima M."/>
            <person name="Kondo S."/>
            <person name="Konno H."/>
            <person name="Nakano K."/>
            <person name="Ninomiya N."/>
            <person name="Nishio T."/>
            <person name="Okada M."/>
            <person name="Plessy C."/>
            <person name="Shibata K."/>
            <person name="Shiraki T."/>
            <person name="Suzuki S."/>
            <person name="Tagami M."/>
            <person name="Waki K."/>
            <person name="Watahiki A."/>
            <person name="Okamura-Oho Y."/>
            <person name="Suzuki H."/>
            <person name="Kawai J."/>
            <person name="Hayashizaki Y."/>
        </authorList>
    </citation>
    <scope>NUCLEOTIDE SEQUENCE [LARGE SCALE MRNA]</scope>
    <source>
        <strain>C57BL/6J</strain>
        <tissue>Cerebellum</tissue>
        <tissue>Eye</tissue>
        <tissue>Spinal ganglion</tissue>
    </source>
</reference>
<reference key="4">
    <citation type="journal article" date="2009" name="J. Neurosci.">
        <title>UBXD4, a UBX-containing protein, regulates the cell surface number and stability of alpha3-containing nicotinic acetylcholine receptors.</title>
        <authorList>
            <person name="Rezvani K."/>
            <person name="Teng Y."/>
            <person name="Pan Y."/>
            <person name="Dani J.A."/>
            <person name="Lindstrom J."/>
            <person name="Garcia Gras E.A."/>
            <person name="McIntosh J.M."/>
            <person name="De Biasi M."/>
        </authorList>
    </citation>
    <scope>INTERACTION WITH UBXN2A</scope>
    <scope>TISSUE SPECIFICITY</scope>
</reference>
<reference key="5">
    <citation type="journal article" date="2011" name="Neuron">
        <title>Aversion to nicotine is regulated by the balanced activity of beta4 and alpha5 nicotinic receptor subunits in the medial habenula.</title>
        <authorList>
            <person name="Frahm S."/>
            <person name="Slimak M.A."/>
            <person name="Ferrarese L."/>
            <person name="Santos-Torres J."/>
            <person name="Antolin-Fontes B."/>
            <person name="Auer S."/>
            <person name="Filkin S."/>
            <person name="Pons S."/>
            <person name="Fontaine J.F."/>
            <person name="Tsetlin V."/>
            <person name="Maskos U."/>
            <person name="Ibanez-Tallon I."/>
        </authorList>
    </citation>
    <scope>FUNCTION</scope>
    <scope>SUBUNIT</scope>
    <scope>ACTIVITY REGULATION</scope>
</reference>
<reference key="6">
    <citation type="journal article" date="2011" name="Science">
        <title>Nicotine decreases food intake through activation of POMC neurons.</title>
        <authorList>
            <person name="Mineur Y.S."/>
            <person name="Abizaid A."/>
            <person name="Rao Y."/>
            <person name="Salas R."/>
            <person name="DiLeone R.J."/>
            <person name="Guendisch D."/>
            <person name="Diano S."/>
            <person name="De Biasi M."/>
            <person name="Horvath T.L."/>
            <person name="Gao X.B."/>
            <person name="Picciotto M.R."/>
        </authorList>
    </citation>
    <scope>FUNCTION</scope>
    <scope>SUBCELLULAR LOCATION</scope>
    <scope>TISSUE SPECIFICITY</scope>
    <scope>ACTIVITY REGULATION</scope>
</reference>
<dbReference type="EMBL" id="AF472588">
    <property type="protein sequence ID" value="AAL84757.1"/>
    <property type="molecule type" value="mRNA"/>
</dbReference>
<dbReference type="EMBL" id="AY574262">
    <property type="protein sequence ID" value="AAS90358.1"/>
    <property type="molecule type" value="mRNA"/>
</dbReference>
<dbReference type="EMBL" id="AK051730">
    <property type="protein sequence ID" value="BAC34740.1"/>
    <property type="molecule type" value="mRNA"/>
</dbReference>
<dbReference type="EMBL" id="AK053497">
    <property type="protein sequence ID" value="BAC35404.1"/>
    <property type="molecule type" value="mRNA"/>
</dbReference>
<dbReference type="EMBL" id="AK080415">
    <property type="protein sequence ID" value="BAC37909.1"/>
    <property type="status" value="ALT_INIT"/>
    <property type="molecule type" value="mRNA"/>
</dbReference>
<dbReference type="CCDS" id="CCDS23199.2"/>
<dbReference type="RefSeq" id="NP_660111.3">
    <property type="nucleotide sequence ID" value="NM_145129.3"/>
</dbReference>
<dbReference type="SMR" id="Q8R4G9"/>
<dbReference type="BioGRID" id="225944">
    <property type="interactions" value="2"/>
</dbReference>
<dbReference type="ComplexPortal" id="CPX-188">
    <property type="entry name" value="Neuronal nicotinic acetylcholine receptor complex, alpha3-alpha5-beta2"/>
</dbReference>
<dbReference type="ComplexPortal" id="CPX-189">
    <property type="entry name" value="Neuronal nicotinic acetylcholine receptor complex, alpha3-beta2"/>
</dbReference>
<dbReference type="ComplexPortal" id="CPX-202">
    <property type="entry name" value="Neuronal nicotinic acetylcholine receptor complex, alpha3-alpha6-beta2-beta3"/>
</dbReference>
<dbReference type="ComplexPortal" id="CPX-204">
    <property type="entry name" value="Neuronal nicotinic acetylcholine receptor complex, alpha3-beta4"/>
</dbReference>
<dbReference type="ComplexPortal" id="CPX-209">
    <property type="entry name" value="Neuronal nicotinic acetylcholine receptor complex, alpha3-alpha5-beta4"/>
</dbReference>
<dbReference type="ComplexPortal" id="CPX-212">
    <property type="entry name" value="Neuronal nicotinic acetylcholine receptor complex, alpha3-alpha6-beta4"/>
</dbReference>
<dbReference type="FunCoup" id="Q8R4G9">
    <property type="interactions" value="515"/>
</dbReference>
<dbReference type="STRING" id="10090.ENSMUSP00000158914"/>
<dbReference type="ChEMBL" id="CHEMBL3885609"/>
<dbReference type="GlyCosmos" id="Q8R4G9">
    <property type="glycosylation" value="2 sites, No reported glycans"/>
</dbReference>
<dbReference type="GlyGen" id="Q8R4G9">
    <property type="glycosylation" value="2 sites"/>
</dbReference>
<dbReference type="PhosphoSitePlus" id="Q8R4G9"/>
<dbReference type="PaxDb" id="10090-ENSMUSP00000034851"/>
<dbReference type="ProteomicsDB" id="285582"/>
<dbReference type="Antibodypedia" id="15113">
    <property type="antibodies" value="299 antibodies from 33 providers"/>
</dbReference>
<dbReference type="DNASU" id="110834"/>
<dbReference type="Ensembl" id="ENSMUST00000034851.7">
    <property type="protein sequence ID" value="ENSMUSP00000034851.6"/>
    <property type="gene ID" value="ENSMUSG00000032303.9"/>
</dbReference>
<dbReference type="GeneID" id="110834"/>
<dbReference type="KEGG" id="mmu:110834"/>
<dbReference type="UCSC" id="uc009pry.1">
    <property type="organism name" value="mouse"/>
</dbReference>
<dbReference type="AGR" id="MGI:87887"/>
<dbReference type="CTD" id="1136"/>
<dbReference type="MGI" id="MGI:87887">
    <property type="gene designation" value="Chrna3"/>
</dbReference>
<dbReference type="VEuPathDB" id="HostDB:ENSMUSG00000032303"/>
<dbReference type="eggNOG" id="KOG3645">
    <property type="taxonomic scope" value="Eukaryota"/>
</dbReference>
<dbReference type="GeneTree" id="ENSGT00940000158487"/>
<dbReference type="InParanoid" id="Q8R4G9"/>
<dbReference type="OMA" id="FANYNQY"/>
<dbReference type="OrthoDB" id="5975154at2759"/>
<dbReference type="PhylomeDB" id="Q8R4G9"/>
<dbReference type="Reactome" id="R-MMU-629587">
    <property type="pathway name" value="Highly sodium permeable postsynaptic acetylcholine nicotinic receptors"/>
</dbReference>
<dbReference type="Reactome" id="R-MMU-629594">
    <property type="pathway name" value="Highly calcium permeable postsynaptic nicotinic acetylcholine receptors"/>
</dbReference>
<dbReference type="Reactome" id="R-MMU-629597">
    <property type="pathway name" value="Highly calcium permeable nicotinic acetylcholine receptors"/>
</dbReference>
<dbReference type="BioGRID-ORCS" id="110834">
    <property type="hits" value="0 hits in 77 CRISPR screens"/>
</dbReference>
<dbReference type="ChiTaRS" id="Chrna3">
    <property type="organism name" value="mouse"/>
</dbReference>
<dbReference type="PRO" id="PR:Q8R4G9"/>
<dbReference type="Proteomes" id="UP000000589">
    <property type="component" value="Chromosome 9"/>
</dbReference>
<dbReference type="RNAct" id="Q8R4G9">
    <property type="molecule type" value="protein"/>
</dbReference>
<dbReference type="Bgee" id="ENSMUSG00000032303">
    <property type="expression patterns" value="Expressed in lumbar dorsal root ganglion and 78 other cell types or tissues"/>
</dbReference>
<dbReference type="ExpressionAtlas" id="Q8R4G9">
    <property type="expression patterns" value="baseline and differential"/>
</dbReference>
<dbReference type="GO" id="GO:0005892">
    <property type="term" value="C:acetylcholine-gated channel complex"/>
    <property type="evidence" value="ECO:0000353"/>
    <property type="project" value="MGI"/>
</dbReference>
<dbReference type="GO" id="GO:0098981">
    <property type="term" value="C:cholinergic synapse"/>
    <property type="evidence" value="ECO:0000314"/>
    <property type="project" value="SynGO"/>
</dbReference>
<dbReference type="GO" id="GO:0005783">
    <property type="term" value="C:endoplasmic reticulum"/>
    <property type="evidence" value="ECO:0007669"/>
    <property type="project" value="UniProtKB-SubCell"/>
</dbReference>
<dbReference type="GO" id="GO:0005794">
    <property type="term" value="C:Golgi apparatus"/>
    <property type="evidence" value="ECO:0007669"/>
    <property type="project" value="UniProtKB-SubCell"/>
</dbReference>
<dbReference type="GO" id="GO:0045211">
    <property type="term" value="C:postsynaptic membrane"/>
    <property type="evidence" value="ECO:0000305"/>
    <property type="project" value="MGI"/>
</dbReference>
<dbReference type="GO" id="GO:0099634">
    <property type="term" value="C:postsynaptic specialization membrane"/>
    <property type="evidence" value="ECO:0000314"/>
    <property type="project" value="SynGO"/>
</dbReference>
<dbReference type="GO" id="GO:0022848">
    <property type="term" value="F:acetylcholine-gated monoatomic cation-selective channel activity"/>
    <property type="evidence" value="ECO:0000315"/>
    <property type="project" value="MGI"/>
</dbReference>
<dbReference type="GO" id="GO:0004888">
    <property type="term" value="F:transmembrane signaling receptor activity"/>
    <property type="evidence" value="ECO:0007669"/>
    <property type="project" value="InterPro"/>
</dbReference>
<dbReference type="GO" id="GO:1904315">
    <property type="term" value="F:transmitter-gated monoatomic ion channel activity involved in regulation of postsynaptic membrane potential"/>
    <property type="evidence" value="ECO:0000314"/>
    <property type="project" value="SynGO"/>
</dbReference>
<dbReference type="GO" id="GO:0035095">
    <property type="term" value="P:behavioral response to nicotine"/>
    <property type="evidence" value="ECO:0000315"/>
    <property type="project" value="MGI"/>
</dbReference>
<dbReference type="GO" id="GO:0060079">
    <property type="term" value="P:excitatory postsynaptic potential"/>
    <property type="evidence" value="ECO:0000315"/>
    <property type="project" value="MGI"/>
</dbReference>
<dbReference type="GO" id="GO:0007626">
    <property type="term" value="P:locomotory behavior"/>
    <property type="evidence" value="ECO:0000315"/>
    <property type="project" value="MGI"/>
</dbReference>
<dbReference type="GO" id="GO:0014056">
    <property type="term" value="P:regulation of acetylcholine secretion, neurotransmission"/>
    <property type="evidence" value="ECO:0000315"/>
    <property type="project" value="MGI"/>
</dbReference>
<dbReference type="GO" id="GO:0048814">
    <property type="term" value="P:regulation of dendrite morphogenesis"/>
    <property type="evidence" value="ECO:0000315"/>
    <property type="project" value="MGI"/>
</dbReference>
<dbReference type="GO" id="GO:0042391">
    <property type="term" value="P:regulation of membrane potential"/>
    <property type="evidence" value="ECO:0000315"/>
    <property type="project" value="MGI"/>
</dbReference>
<dbReference type="GO" id="GO:0006937">
    <property type="term" value="P:regulation of muscle contraction"/>
    <property type="evidence" value="ECO:0000315"/>
    <property type="project" value="MGI"/>
</dbReference>
<dbReference type="GO" id="GO:0006940">
    <property type="term" value="P:regulation of smooth muscle contraction"/>
    <property type="evidence" value="ECO:0000315"/>
    <property type="project" value="MGI"/>
</dbReference>
<dbReference type="GO" id="GO:0060084">
    <property type="term" value="P:synaptic transmission involved in micturition"/>
    <property type="evidence" value="ECO:0000315"/>
    <property type="project" value="MGI"/>
</dbReference>
<dbReference type="GO" id="GO:0007271">
    <property type="term" value="P:synaptic transmission, cholinergic"/>
    <property type="evidence" value="ECO:0000315"/>
    <property type="project" value="MGI"/>
</dbReference>
<dbReference type="CDD" id="cd19016">
    <property type="entry name" value="LGIC_ECD_nAChR_A3"/>
    <property type="match status" value="1"/>
</dbReference>
<dbReference type="CDD" id="cd19064">
    <property type="entry name" value="LGIC_TM_nAChR"/>
    <property type="match status" value="1"/>
</dbReference>
<dbReference type="FunFam" id="2.70.170.10:FF:000008">
    <property type="entry name" value="Cholinergic receptor nicotinic alpha 6 subunit"/>
    <property type="match status" value="1"/>
</dbReference>
<dbReference type="FunFam" id="1.20.58.390:FF:000017">
    <property type="entry name" value="Neuronal acetylcholine receptor subunit alpha-3"/>
    <property type="match status" value="1"/>
</dbReference>
<dbReference type="FunFam" id="1.20.58.390:FF:000001">
    <property type="entry name" value="Neuronal nicotinic acetylcholine receptor subunit 3"/>
    <property type="match status" value="1"/>
</dbReference>
<dbReference type="Gene3D" id="2.70.170.10">
    <property type="entry name" value="Neurotransmitter-gated ion-channel ligand-binding domain"/>
    <property type="match status" value="1"/>
</dbReference>
<dbReference type="Gene3D" id="1.20.58.390">
    <property type="entry name" value="Neurotransmitter-gated ion-channel transmembrane domain"/>
    <property type="match status" value="2"/>
</dbReference>
<dbReference type="InterPro" id="IPR006202">
    <property type="entry name" value="Neur_chan_lig-bd"/>
</dbReference>
<dbReference type="InterPro" id="IPR036734">
    <property type="entry name" value="Neur_chan_lig-bd_sf"/>
</dbReference>
<dbReference type="InterPro" id="IPR006201">
    <property type="entry name" value="Neur_channel"/>
</dbReference>
<dbReference type="InterPro" id="IPR036719">
    <property type="entry name" value="Neuro-gated_channel_TM_sf"/>
</dbReference>
<dbReference type="InterPro" id="IPR038050">
    <property type="entry name" value="Neuro_actylchol_rec"/>
</dbReference>
<dbReference type="InterPro" id="IPR006029">
    <property type="entry name" value="Neurotrans-gated_channel_TM"/>
</dbReference>
<dbReference type="InterPro" id="IPR018000">
    <property type="entry name" value="Neurotransmitter_ion_chnl_CS"/>
</dbReference>
<dbReference type="InterPro" id="IPR002394">
    <property type="entry name" value="Nicotinic_acetylcholine_rcpt"/>
</dbReference>
<dbReference type="NCBIfam" id="TIGR00860">
    <property type="entry name" value="LIC"/>
    <property type="match status" value="1"/>
</dbReference>
<dbReference type="PANTHER" id="PTHR18945">
    <property type="entry name" value="NEUROTRANSMITTER GATED ION CHANNEL"/>
    <property type="match status" value="1"/>
</dbReference>
<dbReference type="Pfam" id="PF02931">
    <property type="entry name" value="Neur_chan_LBD"/>
    <property type="match status" value="1"/>
</dbReference>
<dbReference type="Pfam" id="PF02932">
    <property type="entry name" value="Neur_chan_memb"/>
    <property type="match status" value="1"/>
</dbReference>
<dbReference type="PRINTS" id="PR00254">
    <property type="entry name" value="NICOTINICR"/>
</dbReference>
<dbReference type="PRINTS" id="PR00252">
    <property type="entry name" value="NRIONCHANNEL"/>
</dbReference>
<dbReference type="SUPFAM" id="SSF90112">
    <property type="entry name" value="Neurotransmitter-gated ion-channel transmembrane pore"/>
    <property type="match status" value="1"/>
</dbReference>
<dbReference type="SUPFAM" id="SSF63712">
    <property type="entry name" value="Nicotinic receptor ligand binding domain-like"/>
    <property type="match status" value="1"/>
</dbReference>
<dbReference type="PROSITE" id="PS00236">
    <property type="entry name" value="NEUROTR_ION_CHANNEL"/>
    <property type="match status" value="1"/>
</dbReference>